<accession>Q5KW59</accession>
<feature type="chain" id="PRO_0000229638" description="NAD kinase 2">
    <location>
        <begin position="1"/>
        <end position="267"/>
    </location>
</feature>
<feature type="active site" description="Proton acceptor" evidence="1">
    <location>
        <position position="52"/>
    </location>
</feature>
<feature type="binding site" evidence="1">
    <location>
        <begin position="52"/>
        <end position="53"/>
    </location>
    <ligand>
        <name>NAD(+)</name>
        <dbReference type="ChEBI" id="CHEBI:57540"/>
    </ligand>
</feature>
<feature type="binding site" evidence="1">
    <location>
        <begin position="124"/>
        <end position="125"/>
    </location>
    <ligand>
        <name>NAD(+)</name>
        <dbReference type="ChEBI" id="CHEBI:57540"/>
    </ligand>
</feature>
<feature type="binding site" evidence="1">
    <location>
        <position position="151"/>
    </location>
    <ligand>
        <name>NAD(+)</name>
        <dbReference type="ChEBI" id="CHEBI:57540"/>
    </ligand>
</feature>
<feature type="binding site" evidence="1">
    <location>
        <position position="153"/>
    </location>
    <ligand>
        <name>NAD(+)</name>
        <dbReference type="ChEBI" id="CHEBI:57540"/>
    </ligand>
</feature>
<feature type="binding site" evidence="1">
    <location>
        <begin position="164"/>
        <end position="169"/>
    </location>
    <ligand>
        <name>NAD(+)</name>
        <dbReference type="ChEBI" id="CHEBI:57540"/>
    </ligand>
</feature>
<feature type="binding site" evidence="1">
    <location>
        <position position="188"/>
    </location>
    <ligand>
        <name>NAD(+)</name>
        <dbReference type="ChEBI" id="CHEBI:57540"/>
    </ligand>
</feature>
<organism>
    <name type="scientific">Geobacillus kaustophilus (strain HTA426)</name>
    <dbReference type="NCBI Taxonomy" id="235909"/>
    <lineage>
        <taxon>Bacteria</taxon>
        <taxon>Bacillati</taxon>
        <taxon>Bacillota</taxon>
        <taxon>Bacilli</taxon>
        <taxon>Bacillales</taxon>
        <taxon>Anoxybacillaceae</taxon>
        <taxon>Geobacillus</taxon>
        <taxon>Geobacillus thermoleovorans group</taxon>
    </lineage>
</organism>
<keyword id="KW-0067">ATP-binding</keyword>
<keyword id="KW-0963">Cytoplasm</keyword>
<keyword id="KW-0418">Kinase</keyword>
<keyword id="KW-0520">NAD</keyword>
<keyword id="KW-0521">NADP</keyword>
<keyword id="KW-0547">Nucleotide-binding</keyword>
<keyword id="KW-1185">Reference proteome</keyword>
<keyword id="KW-0808">Transferase</keyword>
<evidence type="ECO:0000255" key="1">
    <source>
        <dbReference type="HAMAP-Rule" id="MF_00361"/>
    </source>
</evidence>
<protein>
    <recommendedName>
        <fullName evidence="1">NAD kinase 2</fullName>
        <ecNumber evidence="1">2.7.1.23</ecNumber>
    </recommendedName>
    <alternativeName>
        <fullName evidence="1">ATP-dependent NAD kinase 2</fullName>
    </alternativeName>
</protein>
<comment type="function">
    <text evidence="1">Involved in the regulation of the intracellular balance of NAD and NADP, and is a key enzyme in the biosynthesis of NADP. Catalyzes specifically the phosphorylation on 2'-hydroxyl of the adenosine moiety of NAD to yield NADP.</text>
</comment>
<comment type="catalytic activity">
    <reaction evidence="1">
        <text>NAD(+) + ATP = ADP + NADP(+) + H(+)</text>
        <dbReference type="Rhea" id="RHEA:18629"/>
        <dbReference type="ChEBI" id="CHEBI:15378"/>
        <dbReference type="ChEBI" id="CHEBI:30616"/>
        <dbReference type="ChEBI" id="CHEBI:57540"/>
        <dbReference type="ChEBI" id="CHEBI:58349"/>
        <dbReference type="ChEBI" id="CHEBI:456216"/>
        <dbReference type="EC" id="2.7.1.23"/>
    </reaction>
</comment>
<comment type="cofactor">
    <cofactor evidence="1">
        <name>a divalent metal cation</name>
        <dbReference type="ChEBI" id="CHEBI:60240"/>
    </cofactor>
</comment>
<comment type="subcellular location">
    <subcellularLocation>
        <location evidence="1">Cytoplasm</location>
    </subcellularLocation>
</comment>
<comment type="similarity">
    <text evidence="1">Belongs to the NAD kinase family.</text>
</comment>
<proteinExistence type="inferred from homology"/>
<gene>
    <name evidence="1" type="primary">nadK2</name>
    <name type="ordered locus">GK2792</name>
</gene>
<name>NADK2_GEOKA</name>
<reference key="1">
    <citation type="journal article" date="2004" name="Nucleic Acids Res.">
        <title>Thermoadaptation trait revealed by the genome sequence of thermophilic Geobacillus kaustophilus.</title>
        <authorList>
            <person name="Takami H."/>
            <person name="Takaki Y."/>
            <person name="Chee G.-J."/>
            <person name="Nishi S."/>
            <person name="Shimamura S."/>
            <person name="Suzuki H."/>
            <person name="Matsui S."/>
            <person name="Uchiyama I."/>
        </authorList>
    </citation>
    <scope>NUCLEOTIDE SEQUENCE [LARGE SCALE GENOMIC DNA]</scope>
    <source>
        <strain>HTA426</strain>
    </source>
</reference>
<dbReference type="EC" id="2.7.1.23" evidence="1"/>
<dbReference type="EMBL" id="BA000043">
    <property type="protein sequence ID" value="BAD77077.1"/>
    <property type="molecule type" value="Genomic_DNA"/>
</dbReference>
<dbReference type="RefSeq" id="WP_011232266.1">
    <property type="nucleotide sequence ID" value="NC_006510.1"/>
</dbReference>
<dbReference type="SMR" id="Q5KW59"/>
<dbReference type="STRING" id="235909.GK2792"/>
<dbReference type="KEGG" id="gka:GK2792"/>
<dbReference type="eggNOG" id="COG0061">
    <property type="taxonomic scope" value="Bacteria"/>
</dbReference>
<dbReference type="HOGENOM" id="CLU_008831_0_3_9"/>
<dbReference type="Proteomes" id="UP000001172">
    <property type="component" value="Chromosome"/>
</dbReference>
<dbReference type="GO" id="GO:0005737">
    <property type="term" value="C:cytoplasm"/>
    <property type="evidence" value="ECO:0007669"/>
    <property type="project" value="UniProtKB-SubCell"/>
</dbReference>
<dbReference type="GO" id="GO:0005524">
    <property type="term" value="F:ATP binding"/>
    <property type="evidence" value="ECO:0007669"/>
    <property type="project" value="UniProtKB-KW"/>
</dbReference>
<dbReference type="GO" id="GO:0046872">
    <property type="term" value="F:metal ion binding"/>
    <property type="evidence" value="ECO:0007669"/>
    <property type="project" value="UniProtKB-UniRule"/>
</dbReference>
<dbReference type="GO" id="GO:0051287">
    <property type="term" value="F:NAD binding"/>
    <property type="evidence" value="ECO:0007669"/>
    <property type="project" value="UniProtKB-ARBA"/>
</dbReference>
<dbReference type="GO" id="GO:0003951">
    <property type="term" value="F:NAD+ kinase activity"/>
    <property type="evidence" value="ECO:0007669"/>
    <property type="project" value="UniProtKB-UniRule"/>
</dbReference>
<dbReference type="GO" id="GO:0019674">
    <property type="term" value="P:NAD metabolic process"/>
    <property type="evidence" value="ECO:0007669"/>
    <property type="project" value="InterPro"/>
</dbReference>
<dbReference type="GO" id="GO:0006741">
    <property type="term" value="P:NADP biosynthetic process"/>
    <property type="evidence" value="ECO:0007669"/>
    <property type="project" value="UniProtKB-UniRule"/>
</dbReference>
<dbReference type="Gene3D" id="3.40.50.10330">
    <property type="entry name" value="Probable inorganic polyphosphate/atp-NAD kinase, domain 1"/>
    <property type="match status" value="1"/>
</dbReference>
<dbReference type="Gene3D" id="2.60.200.30">
    <property type="entry name" value="Probable inorganic polyphosphate/atp-NAD kinase, domain 2"/>
    <property type="match status" value="1"/>
</dbReference>
<dbReference type="HAMAP" id="MF_00361">
    <property type="entry name" value="NAD_kinase"/>
    <property type="match status" value="1"/>
</dbReference>
<dbReference type="InterPro" id="IPR017438">
    <property type="entry name" value="ATP-NAD_kinase_N"/>
</dbReference>
<dbReference type="InterPro" id="IPR017437">
    <property type="entry name" value="ATP-NAD_kinase_PpnK-typ_C"/>
</dbReference>
<dbReference type="InterPro" id="IPR016064">
    <property type="entry name" value="NAD/diacylglycerol_kinase_sf"/>
</dbReference>
<dbReference type="InterPro" id="IPR002504">
    <property type="entry name" value="NADK"/>
</dbReference>
<dbReference type="NCBIfam" id="NF002902">
    <property type="entry name" value="PRK03501.1"/>
    <property type="match status" value="1"/>
</dbReference>
<dbReference type="PANTHER" id="PTHR20275">
    <property type="entry name" value="NAD KINASE"/>
    <property type="match status" value="1"/>
</dbReference>
<dbReference type="PANTHER" id="PTHR20275:SF9">
    <property type="entry name" value="NAD KINASE 2"/>
    <property type="match status" value="1"/>
</dbReference>
<dbReference type="Pfam" id="PF20143">
    <property type="entry name" value="NAD_kinase_C"/>
    <property type="match status" value="1"/>
</dbReference>
<dbReference type="SUPFAM" id="SSF111331">
    <property type="entry name" value="NAD kinase/diacylglycerol kinase-like"/>
    <property type="match status" value="1"/>
</dbReference>
<sequence length="267" mass="30489">MDMERNRLYFFYKRDDKLIERVKPLIELAERGPFVVVDDYREANIIVSIGDDGAFLQAVRQTGFLPDRLYVGVSVLPARGFYCDFHIDDIDHMVEAAKNWKLEVRRYPIIEVTIDGAASFFCLNECSIRSQIIKTMAIDVFIDDLHFETFRGDGIIVSTPTGSTGYNKSVHGAVVDPLLPCFQVSELASLNSNRYRTLGSPFILSGSRTLTLKMSEETSHFPIIGLDNEALSIQHIERIDIRLSDRVVKTVRLKDNSFWDKVKRVFL</sequence>